<reference key="1">
    <citation type="journal article" date="2012" name="Environ. Microbiol.">
        <title>The genome sequence of Desulfatibacillum alkenivorans AK-01: a blueprint for anaerobic alkane oxidation.</title>
        <authorList>
            <person name="Callaghan A.V."/>
            <person name="Morris B.E."/>
            <person name="Pereira I.A."/>
            <person name="McInerney M.J."/>
            <person name="Austin R.N."/>
            <person name="Groves J.T."/>
            <person name="Kukor J.J."/>
            <person name="Suflita J.M."/>
            <person name="Young L.Y."/>
            <person name="Zylstra G.J."/>
            <person name="Wawrik B."/>
        </authorList>
    </citation>
    <scope>NUCLEOTIDE SEQUENCE [LARGE SCALE GENOMIC DNA]</scope>
    <source>
        <strain>AK-01</strain>
    </source>
</reference>
<gene>
    <name evidence="1" type="primary">atpA</name>
    <name type="ordered locus">Dalk_3628</name>
</gene>
<protein>
    <recommendedName>
        <fullName evidence="1">ATP synthase subunit alpha</fullName>
        <ecNumber evidence="1">7.1.2.2</ecNumber>
    </recommendedName>
    <alternativeName>
        <fullName evidence="1">ATP synthase F1 sector subunit alpha</fullName>
    </alternativeName>
    <alternativeName>
        <fullName evidence="1">F-ATPase subunit alpha</fullName>
    </alternativeName>
</protein>
<organism>
    <name type="scientific">Desulfatibacillum aliphaticivorans</name>
    <dbReference type="NCBI Taxonomy" id="218208"/>
    <lineage>
        <taxon>Bacteria</taxon>
        <taxon>Pseudomonadati</taxon>
        <taxon>Thermodesulfobacteriota</taxon>
        <taxon>Desulfobacteria</taxon>
        <taxon>Desulfobacterales</taxon>
        <taxon>Desulfatibacillaceae</taxon>
        <taxon>Desulfatibacillum</taxon>
    </lineage>
</organism>
<evidence type="ECO:0000255" key="1">
    <source>
        <dbReference type="HAMAP-Rule" id="MF_01346"/>
    </source>
</evidence>
<proteinExistence type="inferred from homology"/>
<sequence length="505" mass="54488">MEIRAEEISQIIKEQIKDYDKKVDLSETGTVLSVGDGIARVYGLEKAMALELVEFPGGILGLVLNLEEDNVGVAIMGEVTHIKEGDMVKRTGKIAQVPVGEAVLGRVVDGVGSPIDGKGPLDATETRMVEMVAPGVIARKSVHEPCYTGLKAVDAMTPVGRGQRELIIGDRQIGKTAVAVDAILAQKDTDIYCIYVACGQKKSTVAQVVATLEKYGAMEYTTVVSACASDPATLQYLAPYAGCAMGEYFRDKGQHALIIYDDLSKQAVAYRQISLLLRRPPGREAYPGDIFYNHSRLLERAAKVSDELGAGSLTALPIIETQAGDVSAYIPTNVISITDGQIYLEPGLFFAGVRPAINVGLSVSRVGGAAQEKAMKQVAGTLRMDLAQFRELEAFAAFGSDLDAATQKQLKRGERLVQILKQPQYAPLPLEKQVAILFAGANGFLDAFPADSMAKYEAGMYSFLESKYPDAMGAIAKERKISDETDALLKKALEEYGKEFQDTIQ</sequence>
<dbReference type="EC" id="7.1.2.2" evidence="1"/>
<dbReference type="EMBL" id="CP001322">
    <property type="protein sequence ID" value="ACL05316.1"/>
    <property type="molecule type" value="Genomic_DNA"/>
</dbReference>
<dbReference type="RefSeq" id="WP_015948373.1">
    <property type="nucleotide sequence ID" value="NC_011768.1"/>
</dbReference>
<dbReference type="SMR" id="B8FGT6"/>
<dbReference type="KEGG" id="dal:Dalk_3628"/>
<dbReference type="eggNOG" id="COG0056">
    <property type="taxonomic scope" value="Bacteria"/>
</dbReference>
<dbReference type="HOGENOM" id="CLU_010091_2_1_7"/>
<dbReference type="Proteomes" id="UP000000739">
    <property type="component" value="Chromosome"/>
</dbReference>
<dbReference type="GO" id="GO:0005886">
    <property type="term" value="C:plasma membrane"/>
    <property type="evidence" value="ECO:0007669"/>
    <property type="project" value="UniProtKB-SubCell"/>
</dbReference>
<dbReference type="GO" id="GO:0045259">
    <property type="term" value="C:proton-transporting ATP synthase complex"/>
    <property type="evidence" value="ECO:0007669"/>
    <property type="project" value="UniProtKB-KW"/>
</dbReference>
<dbReference type="GO" id="GO:0043531">
    <property type="term" value="F:ADP binding"/>
    <property type="evidence" value="ECO:0007669"/>
    <property type="project" value="TreeGrafter"/>
</dbReference>
<dbReference type="GO" id="GO:0005524">
    <property type="term" value="F:ATP binding"/>
    <property type="evidence" value="ECO:0007669"/>
    <property type="project" value="UniProtKB-UniRule"/>
</dbReference>
<dbReference type="GO" id="GO:0046933">
    <property type="term" value="F:proton-transporting ATP synthase activity, rotational mechanism"/>
    <property type="evidence" value="ECO:0007669"/>
    <property type="project" value="UniProtKB-UniRule"/>
</dbReference>
<dbReference type="CDD" id="cd18113">
    <property type="entry name" value="ATP-synt_F1_alpha_C"/>
    <property type="match status" value="1"/>
</dbReference>
<dbReference type="CDD" id="cd18116">
    <property type="entry name" value="ATP-synt_F1_alpha_N"/>
    <property type="match status" value="1"/>
</dbReference>
<dbReference type="CDD" id="cd01132">
    <property type="entry name" value="F1-ATPase_alpha_CD"/>
    <property type="match status" value="1"/>
</dbReference>
<dbReference type="FunFam" id="1.20.150.20:FF:000001">
    <property type="entry name" value="ATP synthase subunit alpha"/>
    <property type="match status" value="1"/>
</dbReference>
<dbReference type="FunFam" id="2.40.30.20:FF:000001">
    <property type="entry name" value="ATP synthase subunit alpha"/>
    <property type="match status" value="1"/>
</dbReference>
<dbReference type="FunFam" id="3.40.50.300:FF:000002">
    <property type="entry name" value="ATP synthase subunit alpha"/>
    <property type="match status" value="1"/>
</dbReference>
<dbReference type="Gene3D" id="2.40.30.20">
    <property type="match status" value="1"/>
</dbReference>
<dbReference type="Gene3D" id="1.20.150.20">
    <property type="entry name" value="ATP synthase alpha/beta chain, C-terminal domain"/>
    <property type="match status" value="1"/>
</dbReference>
<dbReference type="Gene3D" id="3.40.50.300">
    <property type="entry name" value="P-loop containing nucleotide triphosphate hydrolases"/>
    <property type="match status" value="1"/>
</dbReference>
<dbReference type="HAMAP" id="MF_01346">
    <property type="entry name" value="ATP_synth_alpha_bact"/>
    <property type="match status" value="1"/>
</dbReference>
<dbReference type="InterPro" id="IPR023366">
    <property type="entry name" value="ATP_synth_asu-like_sf"/>
</dbReference>
<dbReference type="InterPro" id="IPR000793">
    <property type="entry name" value="ATP_synth_asu_C"/>
</dbReference>
<dbReference type="InterPro" id="IPR038376">
    <property type="entry name" value="ATP_synth_asu_C_sf"/>
</dbReference>
<dbReference type="InterPro" id="IPR033732">
    <property type="entry name" value="ATP_synth_F1_a_nt-bd_dom"/>
</dbReference>
<dbReference type="InterPro" id="IPR005294">
    <property type="entry name" value="ATP_synth_F1_asu"/>
</dbReference>
<dbReference type="InterPro" id="IPR020003">
    <property type="entry name" value="ATPase_a/bsu_AS"/>
</dbReference>
<dbReference type="InterPro" id="IPR004100">
    <property type="entry name" value="ATPase_F1/V1/A1_a/bsu_N"/>
</dbReference>
<dbReference type="InterPro" id="IPR036121">
    <property type="entry name" value="ATPase_F1/V1/A1_a/bsu_N_sf"/>
</dbReference>
<dbReference type="InterPro" id="IPR000194">
    <property type="entry name" value="ATPase_F1/V1/A1_a/bsu_nucl-bd"/>
</dbReference>
<dbReference type="InterPro" id="IPR027417">
    <property type="entry name" value="P-loop_NTPase"/>
</dbReference>
<dbReference type="NCBIfam" id="TIGR00962">
    <property type="entry name" value="atpA"/>
    <property type="match status" value="1"/>
</dbReference>
<dbReference type="NCBIfam" id="NF009884">
    <property type="entry name" value="PRK13343.1"/>
    <property type="match status" value="1"/>
</dbReference>
<dbReference type="PANTHER" id="PTHR48082">
    <property type="entry name" value="ATP SYNTHASE SUBUNIT ALPHA, MITOCHONDRIAL"/>
    <property type="match status" value="1"/>
</dbReference>
<dbReference type="PANTHER" id="PTHR48082:SF2">
    <property type="entry name" value="ATP SYNTHASE SUBUNIT ALPHA, MITOCHONDRIAL"/>
    <property type="match status" value="1"/>
</dbReference>
<dbReference type="Pfam" id="PF00006">
    <property type="entry name" value="ATP-synt_ab"/>
    <property type="match status" value="1"/>
</dbReference>
<dbReference type="Pfam" id="PF00306">
    <property type="entry name" value="ATP-synt_ab_C"/>
    <property type="match status" value="1"/>
</dbReference>
<dbReference type="Pfam" id="PF02874">
    <property type="entry name" value="ATP-synt_ab_N"/>
    <property type="match status" value="1"/>
</dbReference>
<dbReference type="PIRSF" id="PIRSF039088">
    <property type="entry name" value="F_ATPase_subunit_alpha"/>
    <property type="match status" value="1"/>
</dbReference>
<dbReference type="SUPFAM" id="SSF47917">
    <property type="entry name" value="C-terminal domain of alpha and beta subunits of F1 ATP synthase"/>
    <property type="match status" value="1"/>
</dbReference>
<dbReference type="SUPFAM" id="SSF50615">
    <property type="entry name" value="N-terminal domain of alpha and beta subunits of F1 ATP synthase"/>
    <property type="match status" value="1"/>
</dbReference>
<dbReference type="SUPFAM" id="SSF52540">
    <property type="entry name" value="P-loop containing nucleoside triphosphate hydrolases"/>
    <property type="match status" value="1"/>
</dbReference>
<dbReference type="PROSITE" id="PS00152">
    <property type="entry name" value="ATPASE_ALPHA_BETA"/>
    <property type="match status" value="1"/>
</dbReference>
<accession>B8FGT6</accession>
<name>ATPA_DESAL</name>
<keyword id="KW-0066">ATP synthesis</keyword>
<keyword id="KW-0067">ATP-binding</keyword>
<keyword id="KW-0997">Cell inner membrane</keyword>
<keyword id="KW-1003">Cell membrane</keyword>
<keyword id="KW-0139">CF(1)</keyword>
<keyword id="KW-0375">Hydrogen ion transport</keyword>
<keyword id="KW-0406">Ion transport</keyword>
<keyword id="KW-0472">Membrane</keyword>
<keyword id="KW-0547">Nucleotide-binding</keyword>
<keyword id="KW-1185">Reference proteome</keyword>
<keyword id="KW-1278">Translocase</keyword>
<keyword id="KW-0813">Transport</keyword>
<feature type="chain" id="PRO_1000143366" description="ATP synthase subunit alpha">
    <location>
        <begin position="1"/>
        <end position="505"/>
    </location>
</feature>
<feature type="binding site" evidence="1">
    <location>
        <begin position="169"/>
        <end position="176"/>
    </location>
    <ligand>
        <name>ATP</name>
        <dbReference type="ChEBI" id="CHEBI:30616"/>
    </ligand>
</feature>
<feature type="site" description="Required for activity" evidence="1">
    <location>
        <position position="362"/>
    </location>
</feature>
<comment type="function">
    <text evidence="1">Produces ATP from ADP in the presence of a proton gradient across the membrane. The alpha chain is a regulatory subunit.</text>
</comment>
<comment type="catalytic activity">
    <reaction evidence="1">
        <text>ATP + H2O + 4 H(+)(in) = ADP + phosphate + 5 H(+)(out)</text>
        <dbReference type="Rhea" id="RHEA:57720"/>
        <dbReference type="ChEBI" id="CHEBI:15377"/>
        <dbReference type="ChEBI" id="CHEBI:15378"/>
        <dbReference type="ChEBI" id="CHEBI:30616"/>
        <dbReference type="ChEBI" id="CHEBI:43474"/>
        <dbReference type="ChEBI" id="CHEBI:456216"/>
        <dbReference type="EC" id="7.1.2.2"/>
    </reaction>
</comment>
<comment type="subunit">
    <text evidence="1">F-type ATPases have 2 components, CF(1) - the catalytic core - and CF(0) - the membrane proton channel. CF(1) has five subunits: alpha(3), beta(3), gamma(1), delta(1), epsilon(1). CF(0) has three main subunits: a(1), b(2) and c(9-12). The alpha and beta chains form an alternating ring which encloses part of the gamma chain. CF(1) is attached to CF(0) by a central stalk formed by the gamma and epsilon chains, while a peripheral stalk is formed by the delta and b chains.</text>
</comment>
<comment type="subcellular location">
    <subcellularLocation>
        <location evidence="1">Cell inner membrane</location>
        <topology evidence="1">Peripheral membrane protein</topology>
    </subcellularLocation>
</comment>
<comment type="similarity">
    <text evidence="1">Belongs to the ATPase alpha/beta chains family.</text>
</comment>